<gene>
    <name evidence="5" type="primary">BCHC2</name>
    <name evidence="7" type="ordered locus">At2g45540</name>
</gene>
<accession>F4IG73</accession>
<accession>O64634</accession>
<proteinExistence type="evidence at protein level"/>
<evidence type="ECO:0000255" key="1"/>
<evidence type="ECO:0000255" key="2">
    <source>
        <dbReference type="PROSITE-ProRule" id="PRU00026"/>
    </source>
</evidence>
<evidence type="ECO:0000255" key="3">
    <source>
        <dbReference type="PROSITE-ProRule" id="PRU01119"/>
    </source>
</evidence>
<evidence type="ECO:0000256" key="4">
    <source>
        <dbReference type="SAM" id="MobiDB-lite"/>
    </source>
</evidence>
<evidence type="ECO:0000303" key="5">
    <source>
    </source>
</evidence>
<evidence type="ECO:0000305" key="6"/>
<evidence type="ECO:0000312" key="7">
    <source>
        <dbReference type="Araport" id="AT2G45540"/>
    </source>
</evidence>
<evidence type="ECO:0000312" key="8">
    <source>
        <dbReference type="Proteomes" id="UP000006548"/>
    </source>
</evidence>
<evidence type="ECO:0007744" key="9">
    <source>
    </source>
</evidence>
<name>BCHC2_ARATH</name>
<comment type="alternative products">
    <event type="alternative splicing"/>
    <isoform>
        <id>F4IG73-1</id>
        <name>1</name>
        <sequence type="displayed"/>
    </isoform>
    <isoform>
        <id>F4IG73-2</id>
        <name>2</name>
        <sequence type="described" ref="VSP_057891"/>
    </isoform>
</comment>
<dbReference type="EMBL" id="AC003680">
    <property type="protein sequence ID" value="AAC06163.1"/>
    <property type="molecule type" value="Genomic_DNA"/>
</dbReference>
<dbReference type="EMBL" id="CP002685">
    <property type="protein sequence ID" value="AEC10567.1"/>
    <property type="molecule type" value="Genomic_DNA"/>
</dbReference>
<dbReference type="EMBL" id="CP002685">
    <property type="protein sequence ID" value="AEC10568.1"/>
    <property type="molecule type" value="Genomic_DNA"/>
</dbReference>
<dbReference type="EMBL" id="CP002685">
    <property type="protein sequence ID" value="ANM63206.1"/>
    <property type="molecule type" value="Genomic_DNA"/>
</dbReference>
<dbReference type="EMBL" id="CP002685">
    <property type="protein sequence ID" value="ANM63207.1"/>
    <property type="molecule type" value="Genomic_DNA"/>
</dbReference>
<dbReference type="EMBL" id="CP002685">
    <property type="protein sequence ID" value="ANM63208.1"/>
    <property type="molecule type" value="Genomic_DNA"/>
</dbReference>
<dbReference type="EMBL" id="CP002685">
    <property type="protein sequence ID" value="ANM63209.1"/>
    <property type="molecule type" value="Genomic_DNA"/>
</dbReference>
<dbReference type="PIR" id="T00867">
    <property type="entry name" value="T00867"/>
</dbReference>
<dbReference type="RefSeq" id="NP_001189752.1">
    <molecule id="F4IG73-1"/>
    <property type="nucleotide sequence ID" value="NM_001202823.2"/>
</dbReference>
<dbReference type="RefSeq" id="NP_001318429.1">
    <molecule id="F4IG73-2"/>
    <property type="nucleotide sequence ID" value="NM_001337139.1"/>
</dbReference>
<dbReference type="RefSeq" id="NP_001325311.1">
    <molecule id="F4IG73-2"/>
    <property type="nucleotide sequence ID" value="NM_001337140.1"/>
</dbReference>
<dbReference type="RefSeq" id="NP_001325312.1">
    <molecule id="F4IG73-2"/>
    <property type="nucleotide sequence ID" value="NM_001337142.1"/>
</dbReference>
<dbReference type="RefSeq" id="NP_001325313.1">
    <molecule id="F4IG73-2"/>
    <property type="nucleotide sequence ID" value="NM_001337141.1"/>
</dbReference>
<dbReference type="RefSeq" id="NP_182078.1">
    <molecule id="F4IG73-2"/>
    <property type="nucleotide sequence ID" value="NM_130116.4"/>
</dbReference>
<dbReference type="SMR" id="F4IG73"/>
<dbReference type="FunCoup" id="F4IG73">
    <property type="interactions" value="1225"/>
</dbReference>
<dbReference type="STRING" id="3702.F4IG73"/>
<dbReference type="GlyGen" id="F4IG73">
    <property type="glycosylation" value="2 sites"/>
</dbReference>
<dbReference type="iPTMnet" id="F4IG73"/>
<dbReference type="PaxDb" id="3702-AT2G45540.2"/>
<dbReference type="ProMEX" id="F4IG73"/>
<dbReference type="ProteomicsDB" id="240854">
    <molecule id="F4IG73-1"/>
</dbReference>
<dbReference type="EnsemblPlants" id="AT2G45540.1">
    <molecule id="F4IG73-2"/>
    <property type="protein sequence ID" value="AT2G45540.1"/>
    <property type="gene ID" value="AT2G45540"/>
</dbReference>
<dbReference type="EnsemblPlants" id="AT2G45540.2">
    <molecule id="F4IG73-1"/>
    <property type="protein sequence ID" value="AT2G45540.2"/>
    <property type="gene ID" value="AT2G45540"/>
</dbReference>
<dbReference type="EnsemblPlants" id="AT2G45540.3">
    <molecule id="F4IG73-2"/>
    <property type="protein sequence ID" value="AT2G45540.3"/>
    <property type="gene ID" value="AT2G45540"/>
</dbReference>
<dbReference type="EnsemblPlants" id="AT2G45540.4">
    <molecule id="F4IG73-2"/>
    <property type="protein sequence ID" value="AT2G45540.4"/>
    <property type="gene ID" value="AT2G45540"/>
</dbReference>
<dbReference type="EnsemblPlants" id="AT2G45540.5">
    <molecule id="F4IG73-2"/>
    <property type="protein sequence ID" value="AT2G45540.5"/>
    <property type="gene ID" value="AT2G45540"/>
</dbReference>
<dbReference type="EnsemblPlants" id="AT2G45540.6">
    <molecule id="F4IG73-2"/>
    <property type="protein sequence ID" value="AT2G45540.6"/>
    <property type="gene ID" value="AT2G45540"/>
</dbReference>
<dbReference type="GeneID" id="819162"/>
<dbReference type="Gramene" id="AT2G45540.1">
    <molecule id="F4IG73-2"/>
    <property type="protein sequence ID" value="AT2G45540.1"/>
    <property type="gene ID" value="AT2G45540"/>
</dbReference>
<dbReference type="Gramene" id="AT2G45540.2">
    <molecule id="F4IG73-1"/>
    <property type="protein sequence ID" value="AT2G45540.2"/>
    <property type="gene ID" value="AT2G45540"/>
</dbReference>
<dbReference type="Gramene" id="AT2G45540.3">
    <molecule id="F4IG73-2"/>
    <property type="protein sequence ID" value="AT2G45540.3"/>
    <property type="gene ID" value="AT2G45540"/>
</dbReference>
<dbReference type="Gramene" id="AT2G45540.4">
    <molecule id="F4IG73-2"/>
    <property type="protein sequence ID" value="AT2G45540.4"/>
    <property type="gene ID" value="AT2G45540"/>
</dbReference>
<dbReference type="Gramene" id="AT2G45540.5">
    <molecule id="F4IG73-2"/>
    <property type="protein sequence ID" value="AT2G45540.5"/>
    <property type="gene ID" value="AT2G45540"/>
</dbReference>
<dbReference type="Gramene" id="AT2G45540.6">
    <molecule id="F4IG73-2"/>
    <property type="protein sequence ID" value="AT2G45540.6"/>
    <property type="gene ID" value="AT2G45540"/>
</dbReference>
<dbReference type="KEGG" id="ath:AT2G45540"/>
<dbReference type="Araport" id="AT2G45540"/>
<dbReference type="TAIR" id="AT2G45540">
    <property type="gene designation" value="BCHC2"/>
</dbReference>
<dbReference type="eggNOG" id="KOG1787">
    <property type="taxonomic scope" value="Eukaryota"/>
</dbReference>
<dbReference type="InParanoid" id="F4IG73"/>
<dbReference type="OMA" id="NMPINES"/>
<dbReference type="PRO" id="PR:F4IG73"/>
<dbReference type="Proteomes" id="UP000006548">
    <property type="component" value="Chromosome 2"/>
</dbReference>
<dbReference type="ExpressionAtlas" id="F4IG73">
    <property type="expression patterns" value="baseline and differential"/>
</dbReference>
<dbReference type="CDD" id="cd06071">
    <property type="entry name" value="Beach"/>
    <property type="match status" value="1"/>
</dbReference>
<dbReference type="CDD" id="cd01201">
    <property type="entry name" value="PH_BEACH"/>
    <property type="match status" value="1"/>
</dbReference>
<dbReference type="FunFam" id="1.10.1540.10:FF:000001">
    <property type="entry name" value="neurobeachin isoform X1"/>
    <property type="match status" value="1"/>
</dbReference>
<dbReference type="Gene3D" id="1.10.1540.10">
    <property type="entry name" value="BEACH domain"/>
    <property type="match status" value="1"/>
</dbReference>
<dbReference type="Gene3D" id="2.30.29.30">
    <property type="entry name" value="Pleckstrin-homology domain (PH domain)/Phosphotyrosine-binding domain (PTB)"/>
    <property type="match status" value="1"/>
</dbReference>
<dbReference type="Gene3D" id="2.130.10.10">
    <property type="entry name" value="YVTN repeat-like/Quinoprotein amine dehydrogenase"/>
    <property type="match status" value="2"/>
</dbReference>
<dbReference type="InterPro" id="IPR000409">
    <property type="entry name" value="BEACH_dom"/>
</dbReference>
<dbReference type="InterPro" id="IPR036372">
    <property type="entry name" value="BEACH_dom_sf"/>
</dbReference>
<dbReference type="InterPro" id="IPR050865">
    <property type="entry name" value="BEACH_Domain"/>
</dbReference>
<dbReference type="InterPro" id="IPR013320">
    <property type="entry name" value="ConA-like_dom_sf"/>
</dbReference>
<dbReference type="InterPro" id="IPR046851">
    <property type="entry name" value="NBCH_WD40"/>
</dbReference>
<dbReference type="InterPro" id="IPR031570">
    <property type="entry name" value="NBEA/BDCP_DUF4704"/>
</dbReference>
<dbReference type="InterPro" id="IPR023362">
    <property type="entry name" value="PH-BEACH_dom"/>
</dbReference>
<dbReference type="InterPro" id="IPR011993">
    <property type="entry name" value="PH-like_dom_sf"/>
</dbReference>
<dbReference type="InterPro" id="IPR015943">
    <property type="entry name" value="WD40/YVTN_repeat-like_dom_sf"/>
</dbReference>
<dbReference type="InterPro" id="IPR036322">
    <property type="entry name" value="WD40_repeat_dom_sf"/>
</dbReference>
<dbReference type="InterPro" id="IPR001680">
    <property type="entry name" value="WD40_rpt"/>
</dbReference>
<dbReference type="PANTHER" id="PTHR13743:SF157">
    <property type="entry name" value="BEACH DOMAIN-CONTAINING PROTEIN C2"/>
    <property type="match status" value="1"/>
</dbReference>
<dbReference type="PANTHER" id="PTHR13743">
    <property type="entry name" value="BEIGE/BEACH-RELATED"/>
    <property type="match status" value="1"/>
</dbReference>
<dbReference type="Pfam" id="PF02138">
    <property type="entry name" value="Beach"/>
    <property type="match status" value="1"/>
</dbReference>
<dbReference type="Pfam" id="PF15787">
    <property type="entry name" value="DUF4704"/>
    <property type="match status" value="2"/>
</dbReference>
<dbReference type="Pfam" id="PF20426">
    <property type="entry name" value="NBCH_WD40"/>
    <property type="match status" value="1"/>
</dbReference>
<dbReference type="Pfam" id="PF14844">
    <property type="entry name" value="PH_BEACH"/>
    <property type="match status" value="1"/>
</dbReference>
<dbReference type="SMART" id="SM01026">
    <property type="entry name" value="Beach"/>
    <property type="match status" value="1"/>
</dbReference>
<dbReference type="SMART" id="SM00320">
    <property type="entry name" value="WD40"/>
    <property type="match status" value="4"/>
</dbReference>
<dbReference type="SUPFAM" id="SSF81837">
    <property type="entry name" value="BEACH domain"/>
    <property type="match status" value="1"/>
</dbReference>
<dbReference type="SUPFAM" id="SSF49899">
    <property type="entry name" value="Concanavalin A-like lectins/glucanases"/>
    <property type="match status" value="1"/>
</dbReference>
<dbReference type="SUPFAM" id="SSF50729">
    <property type="entry name" value="PH domain-like"/>
    <property type="match status" value="1"/>
</dbReference>
<dbReference type="SUPFAM" id="SSF50978">
    <property type="entry name" value="WD40 repeat-like"/>
    <property type="match status" value="1"/>
</dbReference>
<dbReference type="PROSITE" id="PS50197">
    <property type="entry name" value="BEACH"/>
    <property type="match status" value="1"/>
</dbReference>
<dbReference type="PROSITE" id="PS51783">
    <property type="entry name" value="PH_BEACH"/>
    <property type="match status" value="1"/>
</dbReference>
<dbReference type="PROSITE" id="PS50082">
    <property type="entry name" value="WD_REPEATS_2"/>
    <property type="match status" value="1"/>
</dbReference>
<dbReference type="PROSITE" id="PS50294">
    <property type="entry name" value="WD_REPEATS_REGION"/>
    <property type="match status" value="1"/>
</dbReference>
<sequence length="3001" mass="328092">MEDDDERKLPEADIANPLHNRIEAFDTTLQGISSADRAFKDDDFEQVSLGDQEKAANESQGDLQEPGSFSNSDHGRSSFGGTEVVTYQLSGTQEMYDLMPMDDVQSDRLSSPGPEREAAYSMQQSLSETSLDSVHHPESGYSPVHSPQKPKPKATVPNVSPELLHLVDSAIMGKPESLDKLKNVVCGIENFGCGEESEATAFLVVDSLIATMGGVESFEEDEDSNPPSVMLNSRAAIVSGELIPWLPGLGDNVNFMSPRTRMVRGLLVILRSCTRNRAMCSTAGLLGVLLRSVEAIISKDVDMKWNAAAILLLCIQHLAGHSLSVDDLHRWLQVIKAAITTAWSSPLMLALEKAMSGKESRGPACTFEFDGESSGLLGPGESRWPFTNGYAFATWIYIESFADTLNAATAAAAIAAAAAAKSGKTSAMSAAAAASALAGEGTAHMPRLFSFLSADNQGIEAYFHAQFLVVESGSGKGRKSSLHFTHAFKPQCWYFIGLEHSCKQGLLGKAESELRLYIDGSLYESRPFDFPRISKPLSFCCIGTNPPPTMAGLQRRRRQCPLFAEMGPVYIFKEPIGPERMARLASRGGDVLPCFGNGAGLPWLATNDYVRNKAEESSILDADIGGYTHLLYHPCLLSGRFCPDASLSGAAGTLRRPAEVLGQVHVATRMKPVESFWALAYGGPMSLLPLTVSSVHKDSLEPCLGNLPLSLSTVTLAAPVFRIMSVAIQHPGNNEELCRTQGPEILARILSYLLHSLASLDRKHDGVGEEELVAAIVSLCQSQKINHVLKVQLFRTLLLDLKIWSLCNYGLQKKLLSSLQDMVFTEATAMRDAEAIQLLLDGCRRCYWMISEKDSETTFPLDGNTRQMGELNALIDELLVIIELLMGAASPSLAADDLRRLLGFIIDSPQPNQVHCKFNANASAVCSLLALLLIKLVPLFRSQIMYMNSRKPSYNGLHGEMWVISRENGLTDCTRLCWLVVQPNAARAQMFAEVFITSGGIETLLVLLQREAKTGEDNVLAMGRSGKRSSTDPSEKSPYNESGSVKQLDSNPHDNEIGFDLPGPDGNSVEDDNVGSLNVPESVRQEKEHGSTPVVCDSDSVSISNSINTERLSAEIGGISLSISADSARNNVYNVDNSDAVVVGIIRLIGALISSGHLTFDFDARSDVTSNILGSGLHENGGTMFDDKVALLLFALLKAFQAAPNRLMTDNVYTTLLGASINASSTEDGLNFYDSGHRFEHSQLLLVLLRSLPSASKALQSRALQDLLFLACSHPENRSSLTTMEEWPEWILEILISNYEKDAGKQSASVGSCEVEDMIHNFLIIMLEHSMRQKDGWKDIEATIHCAEWLSIVGGSSTGEQRIRREESLPIFKRRLFGGLLDFAARELQAQTQVIAAAAAGVAAEGLAPKDAKAGAENAAQLSVFLVENAIVILMLVEDHLRSQSKQTCATNAVASPSPLKKRTSTLTAIGESSEISSSRASLSSDSGKVPLDILASMADSSGQISAVAMERLTAASAAEPYESVSCAFVSYGSCAMDLAEGWKYRSRLWYGVGLPSKPSSLGGGGSGSDSWKSTLEKDAHGNWIELPLVKKSVSMLQALLLDESGLGGGLGIGGGSGTGMGGMTALYQLLDSDQPFLCMLRMVLLSMREEDYGEDNMLMRNLSSERSSGNSVTLDSGSQMSMRQSRSALLWSVLSPIINMPISDSKRQRVLVTACVLYSEVWHAISRDRRPLRKQYIEAIVPPFIAVLRRWRPLLAGIHELATADGMNPLVVDDRALAADALPVEGALSMVTPEWAAAFASPPAAMSLAMIAAGAAGWEAPPPPTPSHLRRDSSMLERKTAKLQTFSSFQKPLEPPNNNAPPRPRDKAAAKAAALAAARDLERNAKIGSGRGLSAVAMATSAQRRNIGDMERLQRWNTSEAMGVAWMECLQPVDTKSVYGKDFNALSYKFIAVLVASFALARNMQRSEIDRRMQDDIIAANRLCLGSRAWRKLIRYLAEMRCFFGPFGDGICSPERVFWKLDSMESFSRMRQSIRRNYSGTDHHGAAADYDDQTETKSDNGSKGSQSNPPVVAAEVILMEIAYEEDEHGEGDQLDVKGNAEEHKRDEGRISGSHEHASRTSAGNSDPRTSNDLEMVRDSSVVAPGFVPSELDERILLELPTSMVRPLRVVKGTFQITTRRINFIVDNRESQNLADHSDESQSGDQEKDRSWPMSSLHQIYSRRYLLRRSALELFMVDRSNFFFDFGNTEGRRNAYRAIVQARPPHLNNIYLATQRPEQLLRRTQLMERWARWEISNFEYLMQLNTLAGRSYNDITQYPVFPWIISDNSSESLDLSNPSTFRDLSKPIGALNPERLKKFQERYSSFEDPVIPKFHYGSHYSSAGAVLYYLARVEPFTTLSIQLQGGKFDHADRMFSDFPGTWNGVLEDMSDVKELVPELFYLPEVLTNENSIDFGTTQLGEKLDAVKLPPWAKNPVDFVHKQRRALESEHVSAHLHEWIDLIFGYKQRGKEAIMANNVFFYITYEGTVDIDKITDPVQQRATQDQIAYFGQTPSQLLTVPHMKRMPLKDVLHMQTIFRNPKEIKPYTVQTPERCNLPASAIQASSDSVVIVDMNVPAARVAQHKWQPNTPDGQGTPFLFHHGKATTTSTSGSLMRMFKGPASSGTGDWQFPQAQAFASSGIRSSSVIAITSDGEIITGGHADNSIKLVSSDGAKTLETAFGHCAPVTCLALSPDNNFLVTGSRDSTVLLWRIHKAFTSRTSVSEPSTGSGAPSSTSNTNLANTLANKGKKCRLEGPIQVLRGHRRELVCCCVSSDQGVVVSSSESSDVLLHSIRKGRLIRRLVGVKADSLCISSDGVIMAWSSSEGSISVFTINGVLIAKAKFPLFCSVGCMEISMDGQNALIGMNSCSNSDYSSSNDTSKDSKEIERLDVPSPSICFLNLYTLQVFHVLKLGQGQDITALALNVDNTNLLVSTEDKQLIIFTDPALSLKVVDQMLKLGWE</sequence>
<keyword id="KW-0025">Alternative splicing</keyword>
<keyword id="KW-0597">Phosphoprotein</keyword>
<keyword id="KW-1185">Reference proteome</keyword>
<keyword id="KW-0677">Repeat</keyword>
<keyword id="KW-0853">WD repeat</keyword>
<organism evidence="8">
    <name type="scientific">Arabidopsis thaliana</name>
    <name type="common">Mouse-ear cress</name>
    <dbReference type="NCBI Taxonomy" id="3702"/>
    <lineage>
        <taxon>Eukaryota</taxon>
        <taxon>Viridiplantae</taxon>
        <taxon>Streptophyta</taxon>
        <taxon>Embryophyta</taxon>
        <taxon>Tracheophyta</taxon>
        <taxon>Spermatophyta</taxon>
        <taxon>Magnoliopsida</taxon>
        <taxon>eudicotyledons</taxon>
        <taxon>Gunneridae</taxon>
        <taxon>Pentapetalae</taxon>
        <taxon>rosids</taxon>
        <taxon>malvids</taxon>
        <taxon>Brassicales</taxon>
        <taxon>Brassicaceae</taxon>
        <taxon>Camelineae</taxon>
        <taxon>Arabidopsis</taxon>
    </lineage>
</organism>
<reference key="1">
    <citation type="journal article" date="1999" name="Nature">
        <title>Sequence and analysis of chromosome 2 of the plant Arabidopsis thaliana.</title>
        <authorList>
            <person name="Lin X."/>
            <person name="Kaul S."/>
            <person name="Rounsley S.D."/>
            <person name="Shea T.P."/>
            <person name="Benito M.-I."/>
            <person name="Town C.D."/>
            <person name="Fujii C.Y."/>
            <person name="Mason T.M."/>
            <person name="Bowman C.L."/>
            <person name="Barnstead M.E."/>
            <person name="Feldblyum T.V."/>
            <person name="Buell C.R."/>
            <person name="Ketchum K.A."/>
            <person name="Lee J.J."/>
            <person name="Ronning C.M."/>
            <person name="Koo H.L."/>
            <person name="Moffat K.S."/>
            <person name="Cronin L.A."/>
            <person name="Shen M."/>
            <person name="Pai G."/>
            <person name="Van Aken S."/>
            <person name="Umayam L."/>
            <person name="Tallon L.J."/>
            <person name="Gill J.E."/>
            <person name="Adams M.D."/>
            <person name="Carrera A.J."/>
            <person name="Creasy T.H."/>
            <person name="Goodman H.M."/>
            <person name="Somerville C.R."/>
            <person name="Copenhaver G.P."/>
            <person name="Preuss D."/>
            <person name="Nierman W.C."/>
            <person name="White O."/>
            <person name="Eisen J.A."/>
            <person name="Salzberg S.L."/>
            <person name="Fraser C.M."/>
            <person name="Venter J.C."/>
        </authorList>
    </citation>
    <scope>NUCLEOTIDE SEQUENCE [LARGE SCALE GENOMIC DNA]</scope>
    <source>
        <strain>cv. Columbia</strain>
    </source>
</reference>
<reference key="2">
    <citation type="journal article" date="2017" name="Plant J.">
        <title>Araport11: a complete reannotation of the Arabidopsis thaliana reference genome.</title>
        <authorList>
            <person name="Cheng C.Y."/>
            <person name="Krishnakumar V."/>
            <person name="Chan A.P."/>
            <person name="Thibaud-Nissen F."/>
            <person name="Schobel S."/>
            <person name="Town C.D."/>
        </authorList>
    </citation>
    <scope>GENOME REANNOTATION</scope>
    <source>
        <strain evidence="8">cv. Columbia</strain>
    </source>
</reference>
<reference key="3">
    <citation type="journal article" date="2009" name="Plant Physiol.">
        <title>Large-scale Arabidopsis phosphoproteome profiling reveals novel chloroplast kinase substrates and phosphorylation networks.</title>
        <authorList>
            <person name="Reiland S."/>
            <person name="Messerli G."/>
            <person name="Baerenfaller K."/>
            <person name="Gerrits B."/>
            <person name="Endler A."/>
            <person name="Grossmann J."/>
            <person name="Gruissem W."/>
            <person name="Baginsky S."/>
        </authorList>
    </citation>
    <scope>PHOSPHORYLATION [LARGE SCALE ANALYSIS] AT SER-48</scope>
    <scope>IDENTIFICATION BY MASS SPECTROMETRY [LARGE SCALE ANALYSIS]</scope>
</reference>
<reference key="4">
    <citation type="journal article" date="2015" name="Mol. Plant">
        <title>BEACH-domain proteins act together in a cascade to mediate vacuolar protein trafficking and disease resistance in Arabidopsis.</title>
        <authorList>
            <person name="Teh O.K."/>
            <person name="Hatsugai N."/>
            <person name="Tamura K."/>
            <person name="Fuji K."/>
            <person name="Tabata R."/>
            <person name="Yamaguchi K."/>
            <person name="Shingenobu S."/>
            <person name="Yamada M."/>
            <person name="Hasebe M."/>
            <person name="Sawa S."/>
            <person name="Shimada T."/>
            <person name="Hara-Nishimura I."/>
        </authorList>
    </citation>
    <scope>GENE FAMILY</scope>
    <scope>NOMENCLATURE</scope>
</reference>
<protein>
    <recommendedName>
        <fullName evidence="5">BEACH domain-containing protein C2</fullName>
    </recommendedName>
    <alternativeName>
        <fullName evidence="6">BEACH-domain homolog C2</fullName>
    </alternativeName>
</protein>
<feature type="chain" id="PRO_0000434036" description="BEACH domain-containing protein C2">
    <location>
        <begin position="1"/>
        <end position="3001"/>
    </location>
</feature>
<feature type="domain" description="BEACH-type PH" evidence="3">
    <location>
        <begin position="2151"/>
        <end position="2260"/>
    </location>
</feature>
<feature type="domain" description="BEACH" evidence="2">
    <location>
        <begin position="2275"/>
        <end position="2564"/>
    </location>
</feature>
<feature type="repeat" description="WD 1" evidence="1">
    <location>
        <begin position="2679"/>
        <end position="2718"/>
    </location>
</feature>
<feature type="repeat" description="WD 2" evidence="1">
    <location>
        <begin position="2721"/>
        <end position="2760"/>
    </location>
</feature>
<feature type="repeat" description="WD 3" evidence="1">
    <location>
        <begin position="2802"/>
        <end position="2841"/>
    </location>
</feature>
<feature type="repeat" description="WD 4" evidence="1">
    <location>
        <begin position="2842"/>
        <end position="2881"/>
    </location>
</feature>
<feature type="repeat" description="WD 5" evidence="1">
    <location>
        <begin position="2953"/>
        <end position="2992"/>
    </location>
</feature>
<feature type="region of interest" description="Disordered" evidence="4">
    <location>
        <begin position="43"/>
        <end position="80"/>
    </location>
</feature>
<feature type="region of interest" description="Disordered" evidence="4">
    <location>
        <begin position="103"/>
        <end position="156"/>
    </location>
</feature>
<feature type="region of interest" description="Disordered" evidence="4">
    <location>
        <begin position="1018"/>
        <end position="1076"/>
    </location>
</feature>
<feature type="region of interest" description="Disordered" evidence="4">
    <location>
        <begin position="1846"/>
        <end position="1868"/>
    </location>
</feature>
<feature type="region of interest" description="Disordered" evidence="4">
    <location>
        <begin position="2039"/>
        <end position="2071"/>
    </location>
</feature>
<feature type="region of interest" description="Disordered" evidence="4">
    <location>
        <begin position="2101"/>
        <end position="2132"/>
    </location>
</feature>
<feature type="region of interest" description="Disordered" evidence="4">
    <location>
        <begin position="2193"/>
        <end position="2212"/>
    </location>
</feature>
<feature type="compositionally biased region" description="Polar residues" evidence="4">
    <location>
        <begin position="57"/>
        <end position="72"/>
    </location>
</feature>
<feature type="compositionally biased region" description="Polar residues" evidence="4">
    <location>
        <begin position="121"/>
        <end position="132"/>
    </location>
</feature>
<feature type="compositionally biased region" description="Polar residues" evidence="4">
    <location>
        <begin position="1037"/>
        <end position="1050"/>
    </location>
</feature>
<feature type="compositionally biased region" description="Pro residues" evidence="4">
    <location>
        <begin position="1854"/>
        <end position="1863"/>
    </location>
</feature>
<feature type="compositionally biased region" description="Basic and acidic residues" evidence="4">
    <location>
        <begin position="2101"/>
        <end position="2119"/>
    </location>
</feature>
<feature type="compositionally biased region" description="Polar residues" evidence="4">
    <location>
        <begin position="2120"/>
        <end position="2129"/>
    </location>
</feature>
<feature type="compositionally biased region" description="Basic and acidic residues" evidence="4">
    <location>
        <begin position="2196"/>
        <end position="2211"/>
    </location>
</feature>
<feature type="modified residue" description="Phosphoserine" evidence="9">
    <location>
        <position position="48"/>
    </location>
</feature>
<feature type="splice variant" id="VSP_057891" description="In isoform 2.">
    <original>HCKFNANASAVCSLLALLLIKLVPLFRSQIMYMNSRKPSYNGLHGEMWVISRENGLTDCTRLCW</original>
    <variation>ARVLHLMYR</variation>
    <location>
        <begin position="915"/>
        <end position="978"/>
    </location>
</feature>